<organism>
    <name type="scientific">Phenylobacterium zucineum (strain HLK1)</name>
    <dbReference type="NCBI Taxonomy" id="450851"/>
    <lineage>
        <taxon>Bacteria</taxon>
        <taxon>Pseudomonadati</taxon>
        <taxon>Pseudomonadota</taxon>
        <taxon>Alphaproteobacteria</taxon>
        <taxon>Caulobacterales</taxon>
        <taxon>Caulobacteraceae</taxon>
        <taxon>Phenylobacterium</taxon>
    </lineage>
</organism>
<sequence>MPDRPVRTRIAPSPTGMMHIGTARTALFNWLYARHTGGKFLLRIEDTDRERSTDEAVKVIFDGLKWLGLDADEPPVFQFARADRHREAAETLLARGGAYRDYMTPEELEAEREVARAEGRVVRSPWRDASPNDAPDRPFVVRLKAPQEGETVIQDAVKGEVRFQNKQLDDLILLRTDGTPTYNLAVVVDDHDMGVTHVIRGDDHLNNAARQTLIYQGLGWEVPVWAHLPLIHGPDGAKLSKRHGAQAVSEFDSMGYLPETMRNYLAKLGWGHGDDEIFSDEQAIAWFDINDVVSAPARLDWAKLNHLNNHYIRQAEPARLAELVKTVLASRDWPLEAGDMAVIERTIPFVRDGAKTTLELADNVVFALKRRPLELPEKTRTQMTEELRGRLSRLREALAAVEYWDVPSLEAALRAFAEAEGVGLGKFGPQLRAVLSGGAPAPDLAGAMVALTRDESLGRLDDALSPSA</sequence>
<dbReference type="EC" id="6.1.1.17" evidence="1"/>
<dbReference type="EMBL" id="CP000747">
    <property type="protein sequence ID" value="ACG78175.1"/>
    <property type="molecule type" value="Genomic_DNA"/>
</dbReference>
<dbReference type="RefSeq" id="WP_012522317.1">
    <property type="nucleotide sequence ID" value="NC_011144.1"/>
</dbReference>
<dbReference type="SMR" id="B4RBX8"/>
<dbReference type="STRING" id="450851.PHZ_c1764"/>
<dbReference type="KEGG" id="pzu:PHZ_c1764"/>
<dbReference type="eggNOG" id="COG0008">
    <property type="taxonomic scope" value="Bacteria"/>
</dbReference>
<dbReference type="HOGENOM" id="CLU_015768_6_0_5"/>
<dbReference type="OrthoDB" id="9807503at2"/>
<dbReference type="Proteomes" id="UP000001868">
    <property type="component" value="Chromosome"/>
</dbReference>
<dbReference type="GO" id="GO:0005829">
    <property type="term" value="C:cytosol"/>
    <property type="evidence" value="ECO:0007669"/>
    <property type="project" value="TreeGrafter"/>
</dbReference>
<dbReference type="GO" id="GO:0005524">
    <property type="term" value="F:ATP binding"/>
    <property type="evidence" value="ECO:0007669"/>
    <property type="project" value="UniProtKB-UniRule"/>
</dbReference>
<dbReference type="GO" id="GO:0004818">
    <property type="term" value="F:glutamate-tRNA ligase activity"/>
    <property type="evidence" value="ECO:0007669"/>
    <property type="project" value="UniProtKB-UniRule"/>
</dbReference>
<dbReference type="GO" id="GO:0000049">
    <property type="term" value="F:tRNA binding"/>
    <property type="evidence" value="ECO:0007669"/>
    <property type="project" value="InterPro"/>
</dbReference>
<dbReference type="GO" id="GO:0008270">
    <property type="term" value="F:zinc ion binding"/>
    <property type="evidence" value="ECO:0007669"/>
    <property type="project" value="InterPro"/>
</dbReference>
<dbReference type="GO" id="GO:0006424">
    <property type="term" value="P:glutamyl-tRNA aminoacylation"/>
    <property type="evidence" value="ECO:0007669"/>
    <property type="project" value="UniProtKB-UniRule"/>
</dbReference>
<dbReference type="CDD" id="cd00808">
    <property type="entry name" value="GluRS_core"/>
    <property type="match status" value="1"/>
</dbReference>
<dbReference type="FunFam" id="3.40.50.620:FF:000007">
    <property type="entry name" value="Glutamate--tRNA ligase"/>
    <property type="match status" value="1"/>
</dbReference>
<dbReference type="Gene3D" id="1.10.10.350">
    <property type="match status" value="1"/>
</dbReference>
<dbReference type="Gene3D" id="3.40.50.620">
    <property type="entry name" value="HUPs"/>
    <property type="match status" value="1"/>
</dbReference>
<dbReference type="HAMAP" id="MF_00022">
    <property type="entry name" value="Glu_tRNA_synth_type1"/>
    <property type="match status" value="1"/>
</dbReference>
<dbReference type="InterPro" id="IPR045462">
    <property type="entry name" value="aa-tRNA-synth_I_cd-bd"/>
</dbReference>
<dbReference type="InterPro" id="IPR020751">
    <property type="entry name" value="aa-tRNA-synth_I_codon-bd_sub2"/>
</dbReference>
<dbReference type="InterPro" id="IPR001412">
    <property type="entry name" value="aa-tRNA-synth_I_CS"/>
</dbReference>
<dbReference type="InterPro" id="IPR008925">
    <property type="entry name" value="aa_tRNA-synth_I_cd-bd_sf"/>
</dbReference>
<dbReference type="InterPro" id="IPR004527">
    <property type="entry name" value="Glu-tRNA-ligase_bac/mito"/>
</dbReference>
<dbReference type="InterPro" id="IPR000924">
    <property type="entry name" value="Glu/Gln-tRNA-synth"/>
</dbReference>
<dbReference type="InterPro" id="IPR020058">
    <property type="entry name" value="Glu/Gln-tRNA-synth_Ib_cat-dom"/>
</dbReference>
<dbReference type="InterPro" id="IPR049940">
    <property type="entry name" value="GluQ/Sye"/>
</dbReference>
<dbReference type="InterPro" id="IPR033910">
    <property type="entry name" value="GluRS_core"/>
</dbReference>
<dbReference type="InterPro" id="IPR014729">
    <property type="entry name" value="Rossmann-like_a/b/a_fold"/>
</dbReference>
<dbReference type="NCBIfam" id="TIGR00464">
    <property type="entry name" value="gltX_bact"/>
    <property type="match status" value="1"/>
</dbReference>
<dbReference type="PANTHER" id="PTHR43311">
    <property type="entry name" value="GLUTAMATE--TRNA LIGASE"/>
    <property type="match status" value="1"/>
</dbReference>
<dbReference type="PANTHER" id="PTHR43311:SF2">
    <property type="entry name" value="GLUTAMATE--TRNA LIGASE, MITOCHONDRIAL-RELATED"/>
    <property type="match status" value="1"/>
</dbReference>
<dbReference type="Pfam" id="PF19269">
    <property type="entry name" value="Anticodon_2"/>
    <property type="match status" value="1"/>
</dbReference>
<dbReference type="Pfam" id="PF00749">
    <property type="entry name" value="tRNA-synt_1c"/>
    <property type="match status" value="1"/>
</dbReference>
<dbReference type="PRINTS" id="PR00987">
    <property type="entry name" value="TRNASYNTHGLU"/>
</dbReference>
<dbReference type="SUPFAM" id="SSF48163">
    <property type="entry name" value="An anticodon-binding domain of class I aminoacyl-tRNA synthetases"/>
    <property type="match status" value="1"/>
</dbReference>
<dbReference type="SUPFAM" id="SSF52374">
    <property type="entry name" value="Nucleotidylyl transferase"/>
    <property type="match status" value="1"/>
</dbReference>
<dbReference type="PROSITE" id="PS00178">
    <property type="entry name" value="AA_TRNA_LIGASE_I"/>
    <property type="match status" value="1"/>
</dbReference>
<evidence type="ECO:0000255" key="1">
    <source>
        <dbReference type="HAMAP-Rule" id="MF_00022"/>
    </source>
</evidence>
<feature type="chain" id="PRO_0000367735" description="Glutamate--tRNA ligase">
    <location>
        <begin position="1"/>
        <end position="468"/>
    </location>
</feature>
<feature type="short sequence motif" description="'HIGH' region" evidence="1">
    <location>
        <begin position="12"/>
        <end position="22"/>
    </location>
</feature>
<feature type="short sequence motif" description="'KMSKS' region" evidence="1">
    <location>
        <begin position="238"/>
        <end position="242"/>
    </location>
</feature>
<feature type="binding site" evidence="1">
    <location>
        <position position="241"/>
    </location>
    <ligand>
        <name>ATP</name>
        <dbReference type="ChEBI" id="CHEBI:30616"/>
    </ligand>
</feature>
<gene>
    <name evidence="1" type="primary">gltX</name>
    <name type="ordered locus">PHZ_c1764</name>
</gene>
<proteinExistence type="inferred from homology"/>
<name>SYE_PHEZH</name>
<keyword id="KW-0030">Aminoacyl-tRNA synthetase</keyword>
<keyword id="KW-0067">ATP-binding</keyword>
<keyword id="KW-0963">Cytoplasm</keyword>
<keyword id="KW-0436">Ligase</keyword>
<keyword id="KW-0547">Nucleotide-binding</keyword>
<keyword id="KW-0648">Protein biosynthesis</keyword>
<keyword id="KW-1185">Reference proteome</keyword>
<reference key="1">
    <citation type="journal article" date="2008" name="BMC Genomics">
        <title>Complete genome of Phenylobacterium zucineum - a novel facultative intracellular bacterium isolated from human erythroleukemia cell line K562.</title>
        <authorList>
            <person name="Luo Y."/>
            <person name="Xu X."/>
            <person name="Ding Z."/>
            <person name="Liu Z."/>
            <person name="Zhang B."/>
            <person name="Yan Z."/>
            <person name="Sun J."/>
            <person name="Hu S."/>
            <person name="Hu X."/>
        </authorList>
    </citation>
    <scope>NUCLEOTIDE SEQUENCE [LARGE SCALE GENOMIC DNA]</scope>
    <source>
        <strain>HLK1</strain>
    </source>
</reference>
<protein>
    <recommendedName>
        <fullName evidence="1">Glutamate--tRNA ligase</fullName>
        <ecNumber evidence="1">6.1.1.17</ecNumber>
    </recommendedName>
    <alternativeName>
        <fullName evidence="1">Glutamyl-tRNA synthetase</fullName>
        <shortName evidence="1">GluRS</shortName>
    </alternativeName>
</protein>
<accession>B4RBX8</accession>
<comment type="function">
    <text evidence="1">Catalyzes the attachment of glutamate to tRNA(Glu) in a two-step reaction: glutamate is first activated by ATP to form Glu-AMP and then transferred to the acceptor end of tRNA(Glu).</text>
</comment>
<comment type="catalytic activity">
    <reaction evidence="1">
        <text>tRNA(Glu) + L-glutamate + ATP = L-glutamyl-tRNA(Glu) + AMP + diphosphate</text>
        <dbReference type="Rhea" id="RHEA:23540"/>
        <dbReference type="Rhea" id="RHEA-COMP:9663"/>
        <dbReference type="Rhea" id="RHEA-COMP:9680"/>
        <dbReference type="ChEBI" id="CHEBI:29985"/>
        <dbReference type="ChEBI" id="CHEBI:30616"/>
        <dbReference type="ChEBI" id="CHEBI:33019"/>
        <dbReference type="ChEBI" id="CHEBI:78442"/>
        <dbReference type="ChEBI" id="CHEBI:78520"/>
        <dbReference type="ChEBI" id="CHEBI:456215"/>
        <dbReference type="EC" id="6.1.1.17"/>
    </reaction>
</comment>
<comment type="subunit">
    <text evidence="1">Monomer.</text>
</comment>
<comment type="subcellular location">
    <subcellularLocation>
        <location evidence="1">Cytoplasm</location>
    </subcellularLocation>
</comment>
<comment type="similarity">
    <text evidence="1">Belongs to the class-I aminoacyl-tRNA synthetase family. Glutamate--tRNA ligase type 1 subfamily.</text>
</comment>